<dbReference type="EC" id="6.1.1.19" evidence="1"/>
<dbReference type="EMBL" id="AM181176">
    <property type="protein sequence ID" value="CAY46678.1"/>
    <property type="molecule type" value="Genomic_DNA"/>
</dbReference>
<dbReference type="RefSeq" id="WP_012721809.1">
    <property type="nucleotide sequence ID" value="NC_012660.1"/>
</dbReference>
<dbReference type="SMR" id="C3KAH3"/>
<dbReference type="STRING" id="294.SRM1_00450"/>
<dbReference type="PATRIC" id="fig|216595.4.peg.636"/>
<dbReference type="eggNOG" id="COG0018">
    <property type="taxonomic scope" value="Bacteria"/>
</dbReference>
<dbReference type="HOGENOM" id="CLU_006406_5_1_6"/>
<dbReference type="OrthoDB" id="9803211at2"/>
<dbReference type="GO" id="GO:0005737">
    <property type="term" value="C:cytoplasm"/>
    <property type="evidence" value="ECO:0007669"/>
    <property type="project" value="UniProtKB-SubCell"/>
</dbReference>
<dbReference type="GO" id="GO:0004814">
    <property type="term" value="F:arginine-tRNA ligase activity"/>
    <property type="evidence" value="ECO:0007669"/>
    <property type="project" value="UniProtKB-UniRule"/>
</dbReference>
<dbReference type="GO" id="GO:0005524">
    <property type="term" value="F:ATP binding"/>
    <property type="evidence" value="ECO:0007669"/>
    <property type="project" value="UniProtKB-UniRule"/>
</dbReference>
<dbReference type="GO" id="GO:0006420">
    <property type="term" value="P:arginyl-tRNA aminoacylation"/>
    <property type="evidence" value="ECO:0007669"/>
    <property type="project" value="UniProtKB-UniRule"/>
</dbReference>
<dbReference type="CDD" id="cd07956">
    <property type="entry name" value="Anticodon_Ia_Arg"/>
    <property type="match status" value="1"/>
</dbReference>
<dbReference type="CDD" id="cd00671">
    <property type="entry name" value="ArgRS_core"/>
    <property type="match status" value="1"/>
</dbReference>
<dbReference type="FunFam" id="3.30.1360.70:FF:000003">
    <property type="entry name" value="Arginine--tRNA ligase"/>
    <property type="match status" value="1"/>
</dbReference>
<dbReference type="FunFam" id="3.40.50.620:FF:000030">
    <property type="entry name" value="Arginine--tRNA ligase"/>
    <property type="match status" value="1"/>
</dbReference>
<dbReference type="FunFam" id="1.10.730.10:FF:000006">
    <property type="entry name" value="Arginyl-tRNA synthetase 2, mitochondrial"/>
    <property type="match status" value="1"/>
</dbReference>
<dbReference type="Gene3D" id="3.30.1360.70">
    <property type="entry name" value="Arginyl tRNA synthetase N-terminal domain"/>
    <property type="match status" value="1"/>
</dbReference>
<dbReference type="Gene3D" id="3.40.50.620">
    <property type="entry name" value="HUPs"/>
    <property type="match status" value="1"/>
</dbReference>
<dbReference type="Gene3D" id="1.10.730.10">
    <property type="entry name" value="Isoleucyl-tRNA Synthetase, Domain 1"/>
    <property type="match status" value="1"/>
</dbReference>
<dbReference type="HAMAP" id="MF_00123">
    <property type="entry name" value="Arg_tRNA_synth"/>
    <property type="match status" value="1"/>
</dbReference>
<dbReference type="InterPro" id="IPR001412">
    <property type="entry name" value="aa-tRNA-synth_I_CS"/>
</dbReference>
<dbReference type="InterPro" id="IPR001278">
    <property type="entry name" value="Arg-tRNA-ligase"/>
</dbReference>
<dbReference type="InterPro" id="IPR005148">
    <property type="entry name" value="Arg-tRNA-synth_N"/>
</dbReference>
<dbReference type="InterPro" id="IPR036695">
    <property type="entry name" value="Arg-tRNA-synth_N_sf"/>
</dbReference>
<dbReference type="InterPro" id="IPR035684">
    <property type="entry name" value="ArgRS_core"/>
</dbReference>
<dbReference type="InterPro" id="IPR008909">
    <property type="entry name" value="DALR_anticod-bd"/>
</dbReference>
<dbReference type="InterPro" id="IPR014729">
    <property type="entry name" value="Rossmann-like_a/b/a_fold"/>
</dbReference>
<dbReference type="InterPro" id="IPR009080">
    <property type="entry name" value="tRNAsynth_Ia_anticodon-bd"/>
</dbReference>
<dbReference type="NCBIfam" id="TIGR00456">
    <property type="entry name" value="argS"/>
    <property type="match status" value="1"/>
</dbReference>
<dbReference type="PANTHER" id="PTHR11956:SF5">
    <property type="entry name" value="ARGININE--TRNA LIGASE, CYTOPLASMIC"/>
    <property type="match status" value="1"/>
</dbReference>
<dbReference type="PANTHER" id="PTHR11956">
    <property type="entry name" value="ARGINYL-TRNA SYNTHETASE"/>
    <property type="match status" value="1"/>
</dbReference>
<dbReference type="Pfam" id="PF03485">
    <property type="entry name" value="Arg_tRNA_synt_N"/>
    <property type="match status" value="1"/>
</dbReference>
<dbReference type="Pfam" id="PF05746">
    <property type="entry name" value="DALR_1"/>
    <property type="match status" value="1"/>
</dbReference>
<dbReference type="Pfam" id="PF00750">
    <property type="entry name" value="tRNA-synt_1d"/>
    <property type="match status" value="1"/>
</dbReference>
<dbReference type="PRINTS" id="PR01038">
    <property type="entry name" value="TRNASYNTHARG"/>
</dbReference>
<dbReference type="SMART" id="SM01016">
    <property type="entry name" value="Arg_tRNA_synt_N"/>
    <property type="match status" value="1"/>
</dbReference>
<dbReference type="SMART" id="SM00836">
    <property type="entry name" value="DALR_1"/>
    <property type="match status" value="1"/>
</dbReference>
<dbReference type="SUPFAM" id="SSF47323">
    <property type="entry name" value="Anticodon-binding domain of a subclass of class I aminoacyl-tRNA synthetases"/>
    <property type="match status" value="1"/>
</dbReference>
<dbReference type="SUPFAM" id="SSF55190">
    <property type="entry name" value="Arginyl-tRNA synthetase (ArgRS), N-terminal 'additional' domain"/>
    <property type="match status" value="1"/>
</dbReference>
<dbReference type="SUPFAM" id="SSF52374">
    <property type="entry name" value="Nucleotidylyl transferase"/>
    <property type="match status" value="1"/>
</dbReference>
<dbReference type="PROSITE" id="PS00178">
    <property type="entry name" value="AA_TRNA_LIGASE_I"/>
    <property type="match status" value="1"/>
</dbReference>
<gene>
    <name evidence="1" type="primary">argS</name>
    <name type="ordered locus">PFLU_0401</name>
</gene>
<name>SYR_PSEFS</name>
<protein>
    <recommendedName>
        <fullName evidence="1">Arginine--tRNA ligase</fullName>
        <ecNumber evidence="1">6.1.1.19</ecNumber>
    </recommendedName>
    <alternativeName>
        <fullName evidence="1">Arginyl-tRNA synthetase</fullName>
        <shortName evidence="1">ArgRS</shortName>
    </alternativeName>
</protein>
<organism>
    <name type="scientific">Pseudomonas fluorescens (strain SBW25)</name>
    <dbReference type="NCBI Taxonomy" id="216595"/>
    <lineage>
        <taxon>Bacteria</taxon>
        <taxon>Pseudomonadati</taxon>
        <taxon>Pseudomonadota</taxon>
        <taxon>Gammaproteobacteria</taxon>
        <taxon>Pseudomonadales</taxon>
        <taxon>Pseudomonadaceae</taxon>
        <taxon>Pseudomonas</taxon>
    </lineage>
</organism>
<evidence type="ECO:0000255" key="1">
    <source>
        <dbReference type="HAMAP-Rule" id="MF_00123"/>
    </source>
</evidence>
<proteinExistence type="inferred from homology"/>
<sequence length="578" mass="63589">MKDTIRQLIQQALTQLVNEGVLPEGLTPAIQVENTRDKTHGDFASNIAMMLSKPAGMKPRDLAEKIIAALPVDDSVTKAEIAGPGFINFFQNTQALAGRLDAALADARVGVRKAGPAQRTVVDLSAPNLAKEMHVGHLRSTIIGDGVARVLEFLGDEVVRQNHVGDWGTQFGMLMAYLQENPITSDELSDLENFYRAAKKRFDESEAFADRARGLVVKLQAGDAECLALWTKFKDISLSHCQKIYELLNVKLTMADVMGESAYNDDLINVVNDLKAAGMLVESNGAQCVFLDEFKNADGEPLPVIIVKADGGYLYATTDLAAVRYRSGTLKADRALYFVDQRQALHFQQVFAVARKAGFVTHPMDMEHMGFGTMNGADGRPFKTRDGGTVKLIDLLTEAQERAYTLVKEKNPELAEADLRNIARVVGIGAVKYADLSKHRTSDYSFNFDLMLNFEGNTAPYLLYAYTRVAGVFRKLGKDFSEVEGQIDLQASHEQELAAKLAQFGEVLNSVGEKGTPHILCTYLYEVAGLFSSFYENCPILTADDEAQKQSRLRLAALAGRTLKQGLELLGLETLERM</sequence>
<accession>C3KAH3</accession>
<comment type="catalytic activity">
    <reaction evidence="1">
        <text>tRNA(Arg) + L-arginine + ATP = L-arginyl-tRNA(Arg) + AMP + diphosphate</text>
        <dbReference type="Rhea" id="RHEA:20301"/>
        <dbReference type="Rhea" id="RHEA-COMP:9658"/>
        <dbReference type="Rhea" id="RHEA-COMP:9673"/>
        <dbReference type="ChEBI" id="CHEBI:30616"/>
        <dbReference type="ChEBI" id="CHEBI:32682"/>
        <dbReference type="ChEBI" id="CHEBI:33019"/>
        <dbReference type="ChEBI" id="CHEBI:78442"/>
        <dbReference type="ChEBI" id="CHEBI:78513"/>
        <dbReference type="ChEBI" id="CHEBI:456215"/>
        <dbReference type="EC" id="6.1.1.19"/>
    </reaction>
</comment>
<comment type="subunit">
    <text evidence="1">Monomer.</text>
</comment>
<comment type="subcellular location">
    <subcellularLocation>
        <location evidence="1">Cytoplasm</location>
    </subcellularLocation>
</comment>
<comment type="similarity">
    <text evidence="1">Belongs to the class-I aminoacyl-tRNA synthetase family.</text>
</comment>
<reference key="1">
    <citation type="journal article" date="2009" name="Genome Biol.">
        <title>Genomic and genetic analyses of diversity and plant interactions of Pseudomonas fluorescens.</title>
        <authorList>
            <person name="Silby M.W."/>
            <person name="Cerdeno-Tarraga A.M."/>
            <person name="Vernikos G.S."/>
            <person name="Giddens S.R."/>
            <person name="Jackson R.W."/>
            <person name="Preston G.M."/>
            <person name="Zhang X.-X."/>
            <person name="Moon C.D."/>
            <person name="Gehrig S.M."/>
            <person name="Godfrey S.A.C."/>
            <person name="Knight C.G."/>
            <person name="Malone J.G."/>
            <person name="Robinson Z."/>
            <person name="Spiers A.J."/>
            <person name="Harris S."/>
            <person name="Challis G.L."/>
            <person name="Yaxley A.M."/>
            <person name="Harris D."/>
            <person name="Seeger K."/>
            <person name="Murphy L."/>
            <person name="Rutter S."/>
            <person name="Squares R."/>
            <person name="Quail M.A."/>
            <person name="Saunders E."/>
            <person name="Mavromatis K."/>
            <person name="Brettin T.S."/>
            <person name="Bentley S.D."/>
            <person name="Hothersall J."/>
            <person name="Stephens E."/>
            <person name="Thomas C.M."/>
            <person name="Parkhill J."/>
            <person name="Levy S.B."/>
            <person name="Rainey P.B."/>
            <person name="Thomson N.R."/>
        </authorList>
    </citation>
    <scope>NUCLEOTIDE SEQUENCE [LARGE SCALE GENOMIC DNA]</scope>
    <source>
        <strain>SBW25</strain>
    </source>
</reference>
<keyword id="KW-0030">Aminoacyl-tRNA synthetase</keyword>
<keyword id="KW-0067">ATP-binding</keyword>
<keyword id="KW-0963">Cytoplasm</keyword>
<keyword id="KW-0436">Ligase</keyword>
<keyword id="KW-0547">Nucleotide-binding</keyword>
<keyword id="KW-0648">Protein biosynthesis</keyword>
<feature type="chain" id="PRO_1000203102" description="Arginine--tRNA ligase">
    <location>
        <begin position="1"/>
        <end position="578"/>
    </location>
</feature>
<feature type="short sequence motif" description="'HIGH' region">
    <location>
        <begin position="127"/>
        <end position="137"/>
    </location>
</feature>